<protein>
    <recommendedName>
        <fullName evidence="1">NAD(P)H-quinone oxidoreductase subunit M</fullName>
        <ecNumber evidence="1">7.1.1.-</ecNumber>
    </recommendedName>
    <alternativeName>
        <fullName evidence="1">NAD(P)H dehydrogenase I subunit M</fullName>
        <shortName evidence="1">NDH-1 subunit M</shortName>
        <shortName evidence="1">NDH-M</shortName>
    </alternativeName>
</protein>
<feature type="chain" id="PRO_0000352189" description="NAD(P)H-quinone oxidoreductase subunit M">
    <location>
        <begin position="1"/>
        <end position="115"/>
    </location>
</feature>
<accession>A3PAL2</accession>
<organism>
    <name type="scientific">Prochlorococcus marinus (strain MIT 9301)</name>
    <dbReference type="NCBI Taxonomy" id="167546"/>
    <lineage>
        <taxon>Bacteria</taxon>
        <taxon>Bacillati</taxon>
        <taxon>Cyanobacteriota</taxon>
        <taxon>Cyanophyceae</taxon>
        <taxon>Synechococcales</taxon>
        <taxon>Prochlorococcaceae</taxon>
        <taxon>Prochlorococcus</taxon>
    </lineage>
</organism>
<sequence length="115" mass="13420">MEKMLLKSTTRHVRIFTAEVVDEELKFHPNKLTLDLDPDNEFIWNEDSLNKINEKFNGLIKERAGKDLDDYELRKIGSEIEGLIKFLLQNGQLSYNPDCRVMNYSMGLPMTNEVL</sequence>
<dbReference type="EC" id="7.1.1.-" evidence="1"/>
<dbReference type="EMBL" id="CP000576">
    <property type="protein sequence ID" value="ABO16787.1"/>
    <property type="molecule type" value="Genomic_DNA"/>
</dbReference>
<dbReference type="RefSeq" id="WP_011862190.1">
    <property type="nucleotide sequence ID" value="NC_009091.1"/>
</dbReference>
<dbReference type="SMR" id="A3PAL2"/>
<dbReference type="STRING" id="167546.P9301_01641"/>
<dbReference type="KEGG" id="pmg:P9301_01641"/>
<dbReference type="eggNOG" id="ENOG5031AQM">
    <property type="taxonomic scope" value="Bacteria"/>
</dbReference>
<dbReference type="HOGENOM" id="CLU_137431_0_0_3"/>
<dbReference type="OrthoDB" id="461686at2"/>
<dbReference type="Proteomes" id="UP000001430">
    <property type="component" value="Chromosome"/>
</dbReference>
<dbReference type="GO" id="GO:0031676">
    <property type="term" value="C:plasma membrane-derived thylakoid membrane"/>
    <property type="evidence" value="ECO:0007669"/>
    <property type="project" value="UniProtKB-SubCell"/>
</dbReference>
<dbReference type="GO" id="GO:0016655">
    <property type="term" value="F:oxidoreductase activity, acting on NAD(P)H, quinone or similar compound as acceptor"/>
    <property type="evidence" value="ECO:0007669"/>
    <property type="project" value="UniProtKB-UniRule"/>
</dbReference>
<dbReference type="GO" id="GO:0048038">
    <property type="term" value="F:quinone binding"/>
    <property type="evidence" value="ECO:0007669"/>
    <property type="project" value="UniProtKB-KW"/>
</dbReference>
<dbReference type="HAMAP" id="MF_01352">
    <property type="entry name" value="NDH1_NDH1M"/>
    <property type="match status" value="1"/>
</dbReference>
<dbReference type="InterPro" id="IPR018922">
    <property type="entry name" value="NdhM"/>
</dbReference>
<dbReference type="PANTHER" id="PTHR36900">
    <property type="entry name" value="NAD(P)H-QUINONE OXIDOREDUCTASE SUBUNIT M, CHLOROPLASTIC"/>
    <property type="match status" value="1"/>
</dbReference>
<dbReference type="PANTHER" id="PTHR36900:SF1">
    <property type="entry name" value="NAD(P)H-QUINONE OXIDOREDUCTASE SUBUNIT M, CHLOROPLASTIC"/>
    <property type="match status" value="1"/>
</dbReference>
<dbReference type="Pfam" id="PF10664">
    <property type="entry name" value="NdhM"/>
    <property type="match status" value="1"/>
</dbReference>
<proteinExistence type="inferred from homology"/>
<keyword id="KW-0472">Membrane</keyword>
<keyword id="KW-0520">NAD</keyword>
<keyword id="KW-0521">NADP</keyword>
<keyword id="KW-0618">Plastoquinone</keyword>
<keyword id="KW-0874">Quinone</keyword>
<keyword id="KW-1185">Reference proteome</keyword>
<keyword id="KW-0793">Thylakoid</keyword>
<keyword id="KW-1278">Translocase</keyword>
<keyword id="KW-0813">Transport</keyword>
<reference key="1">
    <citation type="journal article" date="2007" name="PLoS Genet.">
        <title>Patterns and implications of gene gain and loss in the evolution of Prochlorococcus.</title>
        <authorList>
            <person name="Kettler G.C."/>
            <person name="Martiny A.C."/>
            <person name="Huang K."/>
            <person name="Zucker J."/>
            <person name="Coleman M.L."/>
            <person name="Rodrigue S."/>
            <person name="Chen F."/>
            <person name="Lapidus A."/>
            <person name="Ferriera S."/>
            <person name="Johnson J."/>
            <person name="Steglich C."/>
            <person name="Church G.M."/>
            <person name="Richardson P."/>
            <person name="Chisholm S.W."/>
        </authorList>
    </citation>
    <scope>NUCLEOTIDE SEQUENCE [LARGE SCALE GENOMIC DNA]</scope>
    <source>
        <strain>MIT 9301</strain>
    </source>
</reference>
<gene>
    <name evidence="1" type="primary">ndhM</name>
    <name type="ordered locus">P9301_01641</name>
</gene>
<comment type="function">
    <text evidence="1">NDH-1 shuttles electrons from an unknown electron donor, via FMN and iron-sulfur (Fe-S) centers, to quinones in the respiratory and/or the photosynthetic chain. The immediate electron acceptor for the enzyme in this species is believed to be plastoquinone. Couples the redox reaction to proton translocation, and thus conserves the redox energy in a proton gradient. Cyanobacterial NDH-1 also plays a role in inorganic carbon-concentration.</text>
</comment>
<comment type="catalytic activity">
    <reaction evidence="1">
        <text>a plastoquinone + NADH + (n+1) H(+)(in) = a plastoquinol + NAD(+) + n H(+)(out)</text>
        <dbReference type="Rhea" id="RHEA:42608"/>
        <dbReference type="Rhea" id="RHEA-COMP:9561"/>
        <dbReference type="Rhea" id="RHEA-COMP:9562"/>
        <dbReference type="ChEBI" id="CHEBI:15378"/>
        <dbReference type="ChEBI" id="CHEBI:17757"/>
        <dbReference type="ChEBI" id="CHEBI:57540"/>
        <dbReference type="ChEBI" id="CHEBI:57945"/>
        <dbReference type="ChEBI" id="CHEBI:62192"/>
    </reaction>
</comment>
<comment type="catalytic activity">
    <reaction evidence="1">
        <text>a plastoquinone + NADPH + (n+1) H(+)(in) = a plastoquinol + NADP(+) + n H(+)(out)</text>
        <dbReference type="Rhea" id="RHEA:42612"/>
        <dbReference type="Rhea" id="RHEA-COMP:9561"/>
        <dbReference type="Rhea" id="RHEA-COMP:9562"/>
        <dbReference type="ChEBI" id="CHEBI:15378"/>
        <dbReference type="ChEBI" id="CHEBI:17757"/>
        <dbReference type="ChEBI" id="CHEBI:57783"/>
        <dbReference type="ChEBI" id="CHEBI:58349"/>
        <dbReference type="ChEBI" id="CHEBI:62192"/>
    </reaction>
</comment>
<comment type="subunit">
    <text evidence="1">NDH-1 can be composed of about 15 different subunits; different subcomplexes with different compositions have been identified which probably have different functions.</text>
</comment>
<comment type="subcellular location">
    <subcellularLocation>
        <location evidence="1">Cellular thylakoid membrane</location>
        <topology evidence="1">Peripheral membrane protein</topology>
        <orientation evidence="1">Cytoplasmic side</orientation>
    </subcellularLocation>
</comment>
<comment type="similarity">
    <text evidence="1">Belongs to the complex I NdhM subunit family.</text>
</comment>
<name>NDHM_PROM0</name>
<evidence type="ECO:0000255" key="1">
    <source>
        <dbReference type="HAMAP-Rule" id="MF_01352"/>
    </source>
</evidence>